<organism>
    <name type="scientific">Methanoculleus marisnigri (strain ATCC 35101 / DSM 1498 / JR1)</name>
    <dbReference type="NCBI Taxonomy" id="368407"/>
    <lineage>
        <taxon>Archaea</taxon>
        <taxon>Methanobacteriati</taxon>
        <taxon>Methanobacteriota</taxon>
        <taxon>Stenosarchaea group</taxon>
        <taxon>Methanomicrobia</taxon>
        <taxon>Methanomicrobiales</taxon>
        <taxon>Methanomicrobiaceae</taxon>
        <taxon>Methanoculleus</taxon>
    </lineage>
</organism>
<comment type="similarity">
    <text evidence="1">Belongs to the UPF0200 family.</text>
</comment>
<accession>A3CVT5</accession>
<evidence type="ECO:0000255" key="1">
    <source>
        <dbReference type="HAMAP-Rule" id="MF_01111"/>
    </source>
</evidence>
<dbReference type="EMBL" id="CP000562">
    <property type="protein sequence ID" value="ABN57485.1"/>
    <property type="molecule type" value="Genomic_DNA"/>
</dbReference>
<dbReference type="RefSeq" id="WP_011844396.1">
    <property type="nucleotide sequence ID" value="NC_009051.1"/>
</dbReference>
<dbReference type="SMR" id="A3CVT5"/>
<dbReference type="STRING" id="368407.Memar_1556"/>
<dbReference type="GeneID" id="4847234"/>
<dbReference type="KEGG" id="mem:Memar_1556"/>
<dbReference type="eggNOG" id="arCOG01045">
    <property type="taxonomic scope" value="Archaea"/>
</dbReference>
<dbReference type="HOGENOM" id="CLU_096329_0_0_2"/>
<dbReference type="OrthoDB" id="85381at2157"/>
<dbReference type="Proteomes" id="UP000002146">
    <property type="component" value="Chromosome"/>
</dbReference>
<dbReference type="GO" id="GO:0005524">
    <property type="term" value="F:ATP binding"/>
    <property type="evidence" value="ECO:0007669"/>
    <property type="project" value="UniProtKB-UniRule"/>
</dbReference>
<dbReference type="Gene3D" id="3.40.50.300">
    <property type="entry name" value="P-loop containing nucleotide triphosphate hydrolases"/>
    <property type="match status" value="1"/>
</dbReference>
<dbReference type="HAMAP" id="MF_01111">
    <property type="entry name" value="UPF0200"/>
    <property type="match status" value="1"/>
</dbReference>
<dbReference type="InterPro" id="IPR022970">
    <property type="entry name" value="NTP_hydrolase-rel"/>
</dbReference>
<dbReference type="InterPro" id="IPR027417">
    <property type="entry name" value="P-loop_NTPase"/>
</dbReference>
<dbReference type="PANTHER" id="PTHR41930:SF1">
    <property type="entry name" value="DEPHOSPHO-COA KINASE"/>
    <property type="match status" value="1"/>
</dbReference>
<dbReference type="PANTHER" id="PTHR41930">
    <property type="entry name" value="UPF0200 PROTEIN MJ1399"/>
    <property type="match status" value="1"/>
</dbReference>
<dbReference type="Pfam" id="PF13207">
    <property type="entry name" value="AAA_17"/>
    <property type="match status" value="1"/>
</dbReference>
<dbReference type="SUPFAM" id="SSF52540">
    <property type="entry name" value="P-loop containing nucleoside triphosphate hydrolases"/>
    <property type="match status" value="1"/>
</dbReference>
<reference key="1">
    <citation type="journal article" date="2009" name="Stand. Genomic Sci.">
        <title>Complete genome sequence of Methanoculleus marisnigri Romesser et al. 1981 type strain JR1.</title>
        <authorList>
            <person name="Anderson I.J."/>
            <person name="Sieprawska-Lupa M."/>
            <person name="Lapidus A."/>
            <person name="Nolan M."/>
            <person name="Copeland A."/>
            <person name="Glavina Del Rio T."/>
            <person name="Tice H."/>
            <person name="Dalin E."/>
            <person name="Barry K."/>
            <person name="Saunders E."/>
            <person name="Han C."/>
            <person name="Brettin T."/>
            <person name="Detter J.C."/>
            <person name="Bruce D."/>
            <person name="Mikhailova N."/>
            <person name="Pitluck S."/>
            <person name="Hauser L."/>
            <person name="Land M."/>
            <person name="Lucas S."/>
            <person name="Richardson P."/>
            <person name="Whitman W.B."/>
            <person name="Kyrpides N.C."/>
        </authorList>
    </citation>
    <scope>NUCLEOTIDE SEQUENCE [LARGE SCALE GENOMIC DNA]</scope>
    <source>
        <strain>ATCC 35101 / DSM 1498 / JR1</strain>
    </source>
</reference>
<protein>
    <recommendedName>
        <fullName evidence="1">UPF0200 protein Memar_1556</fullName>
    </recommendedName>
</protein>
<sequence length="183" mass="19894">MKVIGIVGMPASGKGEASRIARDLGIPVVVMGDAIRERVKEAGLPPTDANFGAIAGKLRADLGMDAIARITIPRIEATGAPVALVDGIRGDYEVATFRDHFPDFTLIGIDSSFTTRYRRLKNRGRSDDSLTPEELRARDERELGWGLGRALEQADCRVTNEASLEEFAAEIRALLCRLGGREE</sequence>
<gene>
    <name type="ordered locus">Memar_1556</name>
</gene>
<feature type="chain" id="PRO_1000084872" description="UPF0200 protein Memar_1556">
    <location>
        <begin position="1"/>
        <end position="183"/>
    </location>
</feature>
<feature type="binding site" evidence="1">
    <location>
        <begin position="8"/>
        <end position="15"/>
    </location>
    <ligand>
        <name>ATP</name>
        <dbReference type="ChEBI" id="CHEBI:30616"/>
    </ligand>
</feature>
<proteinExistence type="inferred from homology"/>
<keyword id="KW-0067">ATP-binding</keyword>
<keyword id="KW-0547">Nucleotide-binding</keyword>
<name>Y1556_METMJ</name>